<sequence length="185" mass="21208">MDLKVFDGQDKSELSMIEVAHAILAHHGKAMAFVDLTNEVQQYLGKSDEEIRERLAQFYTDLNVDGSFISLGDNTWGLRAWYPFESIDEATVGENEEDEEDDRPKKKRRKVNAFLADTDDDDDVIDYDNDDPEDEDLDTDDDADSEDDYDDDTDDFSDDDDDLDDGIEGQLSELHDEEDEDEDDE</sequence>
<accession>B2G5K4</accession>
<dbReference type="EMBL" id="AP007281">
    <property type="protein sequence ID" value="BAG24736.1"/>
    <property type="molecule type" value="Genomic_DNA"/>
</dbReference>
<dbReference type="SMR" id="B2G5K4"/>
<dbReference type="KEGG" id="lrf:LAR_0220"/>
<dbReference type="HOGENOM" id="CLU_116648_0_0_9"/>
<dbReference type="GO" id="GO:0000428">
    <property type="term" value="C:DNA-directed RNA polymerase complex"/>
    <property type="evidence" value="ECO:0007669"/>
    <property type="project" value="UniProtKB-KW"/>
</dbReference>
<dbReference type="GO" id="GO:0003899">
    <property type="term" value="F:DNA-directed RNA polymerase activity"/>
    <property type="evidence" value="ECO:0007669"/>
    <property type="project" value="UniProtKB-UniRule"/>
</dbReference>
<dbReference type="GO" id="GO:0006351">
    <property type="term" value="P:DNA-templated transcription"/>
    <property type="evidence" value="ECO:0007669"/>
    <property type="project" value="InterPro"/>
</dbReference>
<dbReference type="GO" id="GO:0006355">
    <property type="term" value="P:regulation of DNA-templated transcription"/>
    <property type="evidence" value="ECO:0007669"/>
    <property type="project" value="UniProtKB-UniRule"/>
</dbReference>
<dbReference type="Gene3D" id="1.10.10.1250">
    <property type="entry name" value="RNA polymerase, subunit delta, N-terminal domain"/>
    <property type="match status" value="1"/>
</dbReference>
<dbReference type="HAMAP" id="MF_00357">
    <property type="entry name" value="RNApol_bact_RpoE"/>
    <property type="match status" value="1"/>
</dbReference>
<dbReference type="InterPro" id="IPR007759">
    <property type="entry name" value="Asxl_HARE-HTH"/>
</dbReference>
<dbReference type="InterPro" id="IPR038087">
    <property type="entry name" value="RNAP_delta_N_dom_sf"/>
</dbReference>
<dbReference type="InterPro" id="IPR029757">
    <property type="entry name" value="RpoE"/>
</dbReference>
<dbReference type="NCBIfam" id="TIGR04567">
    <property type="entry name" value="RNAP_delt_lowGC"/>
    <property type="match status" value="1"/>
</dbReference>
<dbReference type="Pfam" id="PF05066">
    <property type="entry name" value="HARE-HTH"/>
    <property type="match status" value="1"/>
</dbReference>
<dbReference type="PROSITE" id="PS51913">
    <property type="entry name" value="HTH_HARE"/>
    <property type="match status" value="1"/>
</dbReference>
<feature type="chain" id="PRO_1000120565" description="Probable DNA-directed RNA polymerase subunit delta">
    <location>
        <begin position="1"/>
        <end position="185"/>
    </location>
</feature>
<feature type="domain" description="HTH HARE-type" evidence="2">
    <location>
        <begin position="14"/>
        <end position="81"/>
    </location>
</feature>
<feature type="region of interest" description="Disordered" evidence="3">
    <location>
        <begin position="90"/>
        <end position="185"/>
    </location>
</feature>
<feature type="compositionally biased region" description="Acidic residues" evidence="3">
    <location>
        <begin position="117"/>
        <end position="167"/>
    </location>
</feature>
<feature type="compositionally biased region" description="Acidic residues" evidence="3">
    <location>
        <begin position="175"/>
        <end position="185"/>
    </location>
</feature>
<protein>
    <recommendedName>
        <fullName evidence="1">Probable DNA-directed RNA polymerase subunit delta</fullName>
    </recommendedName>
    <alternativeName>
        <fullName evidence="1">RNAP delta factor</fullName>
    </alternativeName>
</protein>
<name>RPOE_LIMRJ</name>
<comment type="function">
    <text evidence="1">Participates in both the initiation and recycling phases of transcription. In the presence of the delta subunit, RNAP displays an increased specificity of transcription, a decreased affinity for nucleic acids, and an increased efficiency of RNA synthesis because of enhanced recycling.</text>
</comment>
<comment type="subunit">
    <text evidence="1">RNAP is composed of a core of 2 alpha, a beta and a beta' subunits. The core is associated with a delta subunit and one of several sigma factors.</text>
</comment>
<comment type="similarity">
    <text evidence="1">Belongs to the RpoE family.</text>
</comment>
<gene>
    <name evidence="1" type="primary">rpoE</name>
    <name type="ordered locus">LAR_0220</name>
</gene>
<reference key="1">
    <citation type="journal article" date="2008" name="DNA Res.">
        <title>Comparative genome analysis of Lactobacillus reuteri and Lactobacillus fermentum reveal a genomic island for reuterin and cobalamin production.</title>
        <authorList>
            <person name="Morita H."/>
            <person name="Toh H."/>
            <person name="Fukuda S."/>
            <person name="Horikawa H."/>
            <person name="Oshima K."/>
            <person name="Suzuki T."/>
            <person name="Murakami M."/>
            <person name="Hisamatsu S."/>
            <person name="Kato Y."/>
            <person name="Takizawa T."/>
            <person name="Fukuoka H."/>
            <person name="Yoshimura T."/>
            <person name="Itoh K."/>
            <person name="O'Sullivan D.J."/>
            <person name="McKay L.L."/>
            <person name="Ohno H."/>
            <person name="Kikuchi J."/>
            <person name="Masaoka T."/>
            <person name="Hattori M."/>
        </authorList>
    </citation>
    <scope>NUCLEOTIDE SEQUENCE [LARGE SCALE GENOMIC DNA]</scope>
    <source>
        <strain>JCM 1112</strain>
    </source>
</reference>
<proteinExistence type="inferred from homology"/>
<evidence type="ECO:0000255" key="1">
    <source>
        <dbReference type="HAMAP-Rule" id="MF_00357"/>
    </source>
</evidence>
<evidence type="ECO:0000255" key="2">
    <source>
        <dbReference type="PROSITE-ProRule" id="PRU01261"/>
    </source>
</evidence>
<evidence type="ECO:0000256" key="3">
    <source>
        <dbReference type="SAM" id="MobiDB-lite"/>
    </source>
</evidence>
<keyword id="KW-0240">DNA-directed RNA polymerase</keyword>
<keyword id="KW-0548">Nucleotidyltransferase</keyword>
<keyword id="KW-0804">Transcription</keyword>
<keyword id="KW-0808">Transferase</keyword>
<organism>
    <name type="scientific">Limosilactobacillus reuteri subsp. reuteri (strain JCM 1112)</name>
    <name type="common">Lactobacillus reuteri</name>
    <dbReference type="NCBI Taxonomy" id="557433"/>
    <lineage>
        <taxon>Bacteria</taxon>
        <taxon>Bacillati</taxon>
        <taxon>Bacillota</taxon>
        <taxon>Bacilli</taxon>
        <taxon>Lactobacillales</taxon>
        <taxon>Lactobacillaceae</taxon>
        <taxon>Limosilactobacillus</taxon>
    </lineage>
</organism>